<comment type="function">
    <text evidence="1">May be involved in oxidative stress response.</text>
</comment>
<comment type="subunit">
    <text evidence="5">Homodimer.</text>
</comment>
<comment type="subcellular location">
    <subcellularLocation>
        <location evidence="3">Plastid</location>
        <location evidence="3">Chloroplast</location>
    </subcellularLocation>
</comment>
<comment type="similarity">
    <text evidence="4">Belongs to the peptidase C56 family.</text>
</comment>
<organism>
    <name type="scientific">Arabidopsis thaliana</name>
    <name type="common">Mouse-ear cress</name>
    <dbReference type="NCBI Taxonomy" id="3702"/>
    <lineage>
        <taxon>Eukaryota</taxon>
        <taxon>Viridiplantae</taxon>
        <taxon>Streptophyta</taxon>
        <taxon>Embryophyta</taxon>
        <taxon>Tracheophyta</taxon>
        <taxon>Spermatophyta</taxon>
        <taxon>Magnoliopsida</taxon>
        <taxon>eudicotyledons</taxon>
        <taxon>Gunneridae</taxon>
        <taxon>Pentapetalae</taxon>
        <taxon>rosids</taxon>
        <taxon>malvids</taxon>
        <taxon>Brassicales</taxon>
        <taxon>Brassicaceae</taxon>
        <taxon>Camelineae</taxon>
        <taxon>Arabidopsis</taxon>
    </lineage>
</organism>
<dbReference type="EMBL" id="AC008007">
    <property type="protein sequence ID" value="AAF69547.1"/>
    <property type="molecule type" value="Genomic_DNA"/>
</dbReference>
<dbReference type="EMBL" id="CP002684">
    <property type="protein sequence ID" value="AEE32916.1"/>
    <property type="molecule type" value="Genomic_DNA"/>
</dbReference>
<dbReference type="EMBL" id="AY056268">
    <property type="protein sequence ID" value="AAL07117.1"/>
    <property type="molecule type" value="mRNA"/>
</dbReference>
<dbReference type="EMBL" id="AY091184">
    <property type="protein sequence ID" value="AAM14123.1"/>
    <property type="molecule type" value="mRNA"/>
</dbReference>
<dbReference type="EMBL" id="AY084268">
    <property type="protein sequence ID" value="AAM60860.1"/>
    <property type="molecule type" value="mRNA"/>
</dbReference>
<dbReference type="RefSeq" id="NP_564626.1">
    <property type="nucleotide sequence ID" value="NM_104206.3"/>
</dbReference>
<dbReference type="SMR" id="Q9MAH3"/>
<dbReference type="BioGRID" id="26987">
    <property type="interactions" value="2"/>
</dbReference>
<dbReference type="FunCoup" id="Q9MAH3">
    <property type="interactions" value="610"/>
</dbReference>
<dbReference type="IntAct" id="Q9MAH3">
    <property type="interactions" value="2"/>
</dbReference>
<dbReference type="STRING" id="3702.Q9MAH3"/>
<dbReference type="MetOSite" id="Q9MAH3"/>
<dbReference type="PaxDb" id="3702-AT1G53280.1"/>
<dbReference type="ProteomicsDB" id="224061"/>
<dbReference type="EnsemblPlants" id="AT1G53280.1">
    <property type="protein sequence ID" value="AT1G53280.1"/>
    <property type="gene ID" value="AT1G53280"/>
</dbReference>
<dbReference type="GeneID" id="841762"/>
<dbReference type="Gramene" id="AT1G53280.1">
    <property type="protein sequence ID" value="AT1G53280.1"/>
    <property type="gene ID" value="AT1G53280"/>
</dbReference>
<dbReference type="KEGG" id="ath:AT1G53280"/>
<dbReference type="Araport" id="AT1G53280"/>
<dbReference type="TAIR" id="AT1G53280">
    <property type="gene designation" value="DJ1B"/>
</dbReference>
<dbReference type="eggNOG" id="KOG2764">
    <property type="taxonomic scope" value="Eukaryota"/>
</dbReference>
<dbReference type="HOGENOM" id="CLU_000445_44_0_1"/>
<dbReference type="InParanoid" id="Q9MAH3"/>
<dbReference type="OMA" id="FPAMCSK"/>
<dbReference type="PhylomeDB" id="Q9MAH3"/>
<dbReference type="BRENDA" id="4.2.1.130">
    <property type="organism ID" value="399"/>
</dbReference>
<dbReference type="PRO" id="PR:Q9MAH3"/>
<dbReference type="Proteomes" id="UP000006548">
    <property type="component" value="Chromosome 1"/>
</dbReference>
<dbReference type="ExpressionAtlas" id="Q9MAH3">
    <property type="expression patterns" value="baseline and differential"/>
</dbReference>
<dbReference type="GO" id="GO:0009507">
    <property type="term" value="C:chloroplast"/>
    <property type="evidence" value="ECO:0000314"/>
    <property type="project" value="UniProtKB"/>
</dbReference>
<dbReference type="GO" id="GO:0009570">
    <property type="term" value="C:chloroplast stroma"/>
    <property type="evidence" value="ECO:0007005"/>
    <property type="project" value="TAIR"/>
</dbReference>
<dbReference type="GO" id="GO:0019172">
    <property type="term" value="F:glyoxalase III activity"/>
    <property type="evidence" value="ECO:0000314"/>
    <property type="project" value="TAIR"/>
</dbReference>
<dbReference type="CDD" id="cd03135">
    <property type="entry name" value="GATase1_DJ-1"/>
    <property type="match status" value="2"/>
</dbReference>
<dbReference type="FunFam" id="3.40.50.880:FF:000015">
    <property type="entry name" value="Protein DJ-1 homolog C"/>
    <property type="match status" value="2"/>
</dbReference>
<dbReference type="Gene3D" id="3.40.50.880">
    <property type="match status" value="2"/>
</dbReference>
<dbReference type="InterPro" id="IPR029062">
    <property type="entry name" value="Class_I_gatase-like"/>
</dbReference>
<dbReference type="InterPro" id="IPR006287">
    <property type="entry name" value="DJ-1"/>
</dbReference>
<dbReference type="InterPro" id="IPR002818">
    <property type="entry name" value="DJ-1/PfpI"/>
</dbReference>
<dbReference type="InterPro" id="IPR050325">
    <property type="entry name" value="Prot/Nucl_acid_deglycase"/>
</dbReference>
<dbReference type="NCBIfam" id="TIGR01383">
    <property type="entry name" value="not_thiJ"/>
    <property type="match status" value="2"/>
</dbReference>
<dbReference type="PANTHER" id="PTHR48094:SF12">
    <property type="entry name" value="PARKINSON DISEASE PROTEIN 7 HOMOLOG"/>
    <property type="match status" value="1"/>
</dbReference>
<dbReference type="PANTHER" id="PTHR48094">
    <property type="entry name" value="PROTEIN/NUCLEIC ACID DEGLYCASE DJ-1-RELATED"/>
    <property type="match status" value="1"/>
</dbReference>
<dbReference type="Pfam" id="PF01965">
    <property type="entry name" value="DJ-1_PfpI"/>
    <property type="match status" value="2"/>
</dbReference>
<dbReference type="SUPFAM" id="SSF52317">
    <property type="entry name" value="Class I glutamine amidotransferase-like"/>
    <property type="match status" value="2"/>
</dbReference>
<feature type="transit peptide" description="Chloroplast" evidence="2">
    <location>
        <begin position="1"/>
        <end position="45"/>
    </location>
</feature>
<feature type="chain" id="PRO_0000421814" description="Protein DJ-1 homolog B">
    <location>
        <begin position="46"/>
        <end position="438"/>
    </location>
</feature>
<feature type="domain" description="PfpI endopeptidase 1">
    <location>
        <begin position="53"/>
        <end position="220"/>
    </location>
</feature>
<feature type="domain" description="PfpI endopeptidase 2">
    <location>
        <begin position="258"/>
        <end position="424"/>
    </location>
</feature>
<feature type="sequence conflict" description="In Ref. 4; AAM60860." evidence="4" ref="4">
    <original>YSP</original>
    <variation>SSS</variation>
    <location>
        <begin position="28"/>
        <end position="30"/>
    </location>
</feature>
<feature type="sequence conflict" description="In Ref. 4; AAM60860." evidence="4" ref="4">
    <original>K</original>
    <variation>R</variation>
    <location>
        <position position="138"/>
    </location>
</feature>
<feature type="sequence conflict" description="In Ref. 4; AAM60860." evidence="4" ref="4">
    <original>S</original>
    <variation>L</variation>
    <location>
        <position position="319"/>
    </location>
</feature>
<gene>
    <name type="primary">DJ1B</name>
    <name type="ordered locus">At1g53280</name>
    <name type="ORF">F12M16.18</name>
</gene>
<name>DJ1B_ARATH</name>
<evidence type="ECO:0000250" key="1"/>
<evidence type="ECO:0000255" key="2"/>
<evidence type="ECO:0000269" key="3">
    <source>
    </source>
</evidence>
<evidence type="ECO:0000305" key="4"/>
<evidence type="ECO:0000305" key="5">
    <source>
    </source>
</evidence>
<proteinExistence type="evidence at protein level"/>
<sequence length="438" mass="46991">MASSSLCHRYFNKITVTPFFNTKKLHHYSPRRISLRVNRRSFSISATMSSSTKKVLIPVAHGTEPFEAVVMIDVLRRGGADVTVASVENQVGVDACHGIKMVADTLLSDITDSVFDLIMLPGGLPGGETLKNCKPLEKMVKKQDTDGRLNAAICCAPALAFGTWGLLEGKKATCYPVFMEKLAACATAVESRVEIDGKIVTSRGPGTTMEFSVTLVEQLLGKEKAVEVSGPLVMRPNPGDEYTITELNQVSWSFEGTPQILVPIADGSEEMEAVAIIDVLKRAKANVVVAALGNSLEVVASRKVKLVADVLLDEAEKNSYDLIVLPGGLGGAEAFASSEKLVNMLKKQAESNKPYGAICASPALVFEPHGLLKGKKATAFPAMCSKLTDQSHIEHRVLVDGNLITSRGPGTSLEFALAIVEKFYGREKGLQLSKATLV</sequence>
<reference key="1">
    <citation type="journal article" date="2000" name="Nature">
        <title>Sequence and analysis of chromosome 1 of the plant Arabidopsis thaliana.</title>
        <authorList>
            <person name="Theologis A."/>
            <person name="Ecker J.R."/>
            <person name="Palm C.J."/>
            <person name="Federspiel N.A."/>
            <person name="Kaul S."/>
            <person name="White O."/>
            <person name="Alonso J."/>
            <person name="Altafi H."/>
            <person name="Araujo R."/>
            <person name="Bowman C.L."/>
            <person name="Brooks S.Y."/>
            <person name="Buehler E."/>
            <person name="Chan A."/>
            <person name="Chao Q."/>
            <person name="Chen H."/>
            <person name="Cheuk R.F."/>
            <person name="Chin C.W."/>
            <person name="Chung M.K."/>
            <person name="Conn L."/>
            <person name="Conway A.B."/>
            <person name="Conway A.R."/>
            <person name="Creasy T.H."/>
            <person name="Dewar K."/>
            <person name="Dunn P."/>
            <person name="Etgu P."/>
            <person name="Feldblyum T.V."/>
            <person name="Feng J.-D."/>
            <person name="Fong B."/>
            <person name="Fujii C.Y."/>
            <person name="Gill J.E."/>
            <person name="Goldsmith A.D."/>
            <person name="Haas B."/>
            <person name="Hansen N.F."/>
            <person name="Hughes B."/>
            <person name="Huizar L."/>
            <person name="Hunter J.L."/>
            <person name="Jenkins J."/>
            <person name="Johnson-Hopson C."/>
            <person name="Khan S."/>
            <person name="Khaykin E."/>
            <person name="Kim C.J."/>
            <person name="Koo H.L."/>
            <person name="Kremenetskaia I."/>
            <person name="Kurtz D.B."/>
            <person name="Kwan A."/>
            <person name="Lam B."/>
            <person name="Langin-Hooper S."/>
            <person name="Lee A."/>
            <person name="Lee J.M."/>
            <person name="Lenz C.A."/>
            <person name="Li J.H."/>
            <person name="Li Y.-P."/>
            <person name="Lin X."/>
            <person name="Liu S.X."/>
            <person name="Liu Z.A."/>
            <person name="Luros J.S."/>
            <person name="Maiti R."/>
            <person name="Marziali A."/>
            <person name="Militscher J."/>
            <person name="Miranda M."/>
            <person name="Nguyen M."/>
            <person name="Nierman W.C."/>
            <person name="Osborne B.I."/>
            <person name="Pai G."/>
            <person name="Peterson J."/>
            <person name="Pham P.K."/>
            <person name="Rizzo M."/>
            <person name="Rooney T."/>
            <person name="Rowley D."/>
            <person name="Sakano H."/>
            <person name="Salzberg S.L."/>
            <person name="Schwartz J.R."/>
            <person name="Shinn P."/>
            <person name="Southwick A.M."/>
            <person name="Sun H."/>
            <person name="Tallon L.J."/>
            <person name="Tambunga G."/>
            <person name="Toriumi M.J."/>
            <person name="Town C.D."/>
            <person name="Utterback T."/>
            <person name="Van Aken S."/>
            <person name="Vaysberg M."/>
            <person name="Vysotskaia V.S."/>
            <person name="Walker M."/>
            <person name="Wu D."/>
            <person name="Yu G."/>
            <person name="Fraser C.M."/>
            <person name="Venter J.C."/>
            <person name="Davis R.W."/>
        </authorList>
    </citation>
    <scope>NUCLEOTIDE SEQUENCE [LARGE SCALE GENOMIC DNA]</scope>
    <source>
        <strain>cv. Columbia</strain>
    </source>
</reference>
<reference key="2">
    <citation type="journal article" date="2017" name="Plant J.">
        <title>Araport11: a complete reannotation of the Arabidopsis thaliana reference genome.</title>
        <authorList>
            <person name="Cheng C.Y."/>
            <person name="Krishnakumar V."/>
            <person name="Chan A.P."/>
            <person name="Thibaud-Nissen F."/>
            <person name="Schobel S."/>
            <person name="Town C.D."/>
        </authorList>
    </citation>
    <scope>GENOME REANNOTATION</scope>
    <source>
        <strain>cv. Columbia</strain>
    </source>
</reference>
<reference key="3">
    <citation type="journal article" date="2003" name="Science">
        <title>Empirical analysis of transcriptional activity in the Arabidopsis genome.</title>
        <authorList>
            <person name="Yamada K."/>
            <person name="Lim J."/>
            <person name="Dale J.M."/>
            <person name="Chen H."/>
            <person name="Shinn P."/>
            <person name="Palm C.J."/>
            <person name="Southwick A.M."/>
            <person name="Wu H.C."/>
            <person name="Kim C.J."/>
            <person name="Nguyen M."/>
            <person name="Pham P.K."/>
            <person name="Cheuk R.F."/>
            <person name="Karlin-Newmann G."/>
            <person name="Liu S.X."/>
            <person name="Lam B."/>
            <person name="Sakano H."/>
            <person name="Wu T."/>
            <person name="Yu G."/>
            <person name="Miranda M."/>
            <person name="Quach H.L."/>
            <person name="Tripp M."/>
            <person name="Chang C.H."/>
            <person name="Lee J.M."/>
            <person name="Toriumi M.J."/>
            <person name="Chan M.M."/>
            <person name="Tang C.C."/>
            <person name="Onodera C.S."/>
            <person name="Deng J.M."/>
            <person name="Akiyama K."/>
            <person name="Ansari Y."/>
            <person name="Arakawa T."/>
            <person name="Banh J."/>
            <person name="Banno F."/>
            <person name="Bowser L."/>
            <person name="Brooks S.Y."/>
            <person name="Carninci P."/>
            <person name="Chao Q."/>
            <person name="Choy N."/>
            <person name="Enju A."/>
            <person name="Goldsmith A.D."/>
            <person name="Gurjal M."/>
            <person name="Hansen N.F."/>
            <person name="Hayashizaki Y."/>
            <person name="Johnson-Hopson C."/>
            <person name="Hsuan V.W."/>
            <person name="Iida K."/>
            <person name="Karnes M."/>
            <person name="Khan S."/>
            <person name="Koesema E."/>
            <person name="Ishida J."/>
            <person name="Jiang P.X."/>
            <person name="Jones T."/>
            <person name="Kawai J."/>
            <person name="Kamiya A."/>
            <person name="Meyers C."/>
            <person name="Nakajima M."/>
            <person name="Narusaka M."/>
            <person name="Seki M."/>
            <person name="Sakurai T."/>
            <person name="Satou M."/>
            <person name="Tamse R."/>
            <person name="Vaysberg M."/>
            <person name="Wallender E.K."/>
            <person name="Wong C."/>
            <person name="Yamamura Y."/>
            <person name="Yuan S."/>
            <person name="Shinozaki K."/>
            <person name="Davis R.W."/>
            <person name="Theologis A."/>
            <person name="Ecker J.R."/>
        </authorList>
    </citation>
    <scope>NUCLEOTIDE SEQUENCE [LARGE SCALE MRNA]</scope>
    <source>
        <strain>cv. Columbia</strain>
    </source>
</reference>
<reference key="4">
    <citation type="submission" date="2002-03" db="EMBL/GenBank/DDBJ databases">
        <title>Full-length cDNA from Arabidopsis thaliana.</title>
        <authorList>
            <person name="Brover V.V."/>
            <person name="Troukhan M.E."/>
            <person name="Alexandrov N.A."/>
            <person name="Lu Y.-P."/>
            <person name="Flavell R.B."/>
            <person name="Feldmann K.A."/>
        </authorList>
    </citation>
    <scope>NUCLEOTIDE SEQUENCE [LARGE SCALE MRNA]</scope>
</reference>
<reference key="5">
    <citation type="journal article" date="2010" name="J. Cell Sci.">
        <title>The Arabidopsis DJ-1a protein confers stress protection through cytosolic SOD activation.</title>
        <authorList>
            <person name="Xu X.M."/>
            <person name="Lin H."/>
            <person name="Maple J."/>
            <person name="Bjoerkblom B."/>
            <person name="Alves G."/>
            <person name="Larsen J.P."/>
            <person name="Moeller S.G."/>
        </authorList>
    </citation>
    <scope>SUBCELLULAR LOCATION</scope>
</reference>
<reference key="6">
    <citation type="journal article" date="2013" name="FEBS J.">
        <title>Novel glyoxalases from Arabidopsis thaliana.</title>
        <authorList>
            <person name="Kwon K."/>
            <person name="Choi D."/>
            <person name="Hyun J.K."/>
            <person name="Jung H.S."/>
            <person name="Baek K."/>
            <person name="Park C."/>
        </authorList>
    </citation>
    <scope>SUBUNIT</scope>
</reference>
<keyword id="KW-0150">Chloroplast</keyword>
<keyword id="KW-0934">Plastid</keyword>
<keyword id="KW-1185">Reference proteome</keyword>
<keyword id="KW-0677">Repeat</keyword>
<keyword id="KW-0346">Stress response</keyword>
<keyword id="KW-0809">Transit peptide</keyword>
<protein>
    <recommendedName>
        <fullName>Protein DJ-1 homolog B</fullName>
        <shortName>AtDJ1B</shortName>
    </recommendedName>
</protein>
<accession>Q9MAH3</accession>
<accession>Q8LGH3</accession>